<feature type="chain" id="PRO_0000051634" description="Cytochrome P450 1A1">
    <location>
        <begin position="1"/>
        <end position="521"/>
    </location>
</feature>
<feature type="binding site" evidence="1">
    <location>
        <position position="229"/>
    </location>
    <ligand>
        <name>substrate</name>
    </ligand>
</feature>
<feature type="binding site" description="axial binding residue" evidence="1">
    <location>
        <position position="463"/>
    </location>
    <ligand>
        <name>heme</name>
        <dbReference type="ChEBI" id="CHEBI:30413"/>
    </ligand>
    <ligandPart>
        <name>Fe</name>
        <dbReference type="ChEBI" id="CHEBI:18248"/>
    </ligandPart>
</feature>
<dbReference type="EC" id="1.14.14.1"/>
<dbReference type="EMBL" id="U19855">
    <property type="protein sequence ID" value="AAA62123.1"/>
    <property type="molecule type" value="mRNA"/>
</dbReference>
<dbReference type="SMR" id="Q92039"/>
<dbReference type="GO" id="GO:0005789">
    <property type="term" value="C:endoplasmic reticulum membrane"/>
    <property type="evidence" value="ECO:0007669"/>
    <property type="project" value="UniProtKB-SubCell"/>
</dbReference>
<dbReference type="GO" id="GO:0020037">
    <property type="term" value="F:heme binding"/>
    <property type="evidence" value="ECO:0007669"/>
    <property type="project" value="InterPro"/>
</dbReference>
<dbReference type="GO" id="GO:0005506">
    <property type="term" value="F:iron ion binding"/>
    <property type="evidence" value="ECO:0007669"/>
    <property type="project" value="InterPro"/>
</dbReference>
<dbReference type="GO" id="GO:0004508">
    <property type="term" value="F:steroid 17-alpha-monooxygenase activity"/>
    <property type="evidence" value="ECO:0007669"/>
    <property type="project" value="TreeGrafter"/>
</dbReference>
<dbReference type="GO" id="GO:0042446">
    <property type="term" value="P:hormone biosynthetic process"/>
    <property type="evidence" value="ECO:0007669"/>
    <property type="project" value="TreeGrafter"/>
</dbReference>
<dbReference type="GO" id="GO:0042448">
    <property type="term" value="P:progesterone metabolic process"/>
    <property type="evidence" value="ECO:0007669"/>
    <property type="project" value="TreeGrafter"/>
</dbReference>
<dbReference type="CDD" id="cd20676">
    <property type="entry name" value="CYP1A"/>
    <property type="match status" value="1"/>
</dbReference>
<dbReference type="FunFam" id="1.10.630.10:FF:000002">
    <property type="entry name" value="Cytochrome P450 1A1"/>
    <property type="match status" value="1"/>
</dbReference>
<dbReference type="Gene3D" id="1.10.630.10">
    <property type="entry name" value="Cytochrome P450"/>
    <property type="match status" value="1"/>
</dbReference>
<dbReference type="InterPro" id="IPR001128">
    <property type="entry name" value="Cyt_P450"/>
</dbReference>
<dbReference type="InterPro" id="IPR017972">
    <property type="entry name" value="Cyt_P450_CS"/>
</dbReference>
<dbReference type="InterPro" id="IPR002401">
    <property type="entry name" value="Cyt_P450_E_grp-I"/>
</dbReference>
<dbReference type="InterPro" id="IPR008066">
    <property type="entry name" value="Cyt_P450_E_grp-I_CYP1"/>
</dbReference>
<dbReference type="InterPro" id="IPR036396">
    <property type="entry name" value="Cyt_P450_sf"/>
</dbReference>
<dbReference type="PANTHER" id="PTHR24289:SF21">
    <property type="entry name" value="CYTOCHROME P450 1A"/>
    <property type="match status" value="1"/>
</dbReference>
<dbReference type="PANTHER" id="PTHR24289">
    <property type="entry name" value="STEROID 17-ALPHA-HYDROXYLASE/17,20 LYASE"/>
    <property type="match status" value="1"/>
</dbReference>
<dbReference type="Pfam" id="PF00067">
    <property type="entry name" value="p450"/>
    <property type="match status" value="1"/>
</dbReference>
<dbReference type="PRINTS" id="PR00463">
    <property type="entry name" value="EP450I"/>
</dbReference>
<dbReference type="PRINTS" id="PR01683">
    <property type="entry name" value="EP450ICYP1A"/>
</dbReference>
<dbReference type="PRINTS" id="PR00385">
    <property type="entry name" value="P450"/>
</dbReference>
<dbReference type="SUPFAM" id="SSF48264">
    <property type="entry name" value="Cytochrome P450"/>
    <property type="match status" value="1"/>
</dbReference>
<dbReference type="PROSITE" id="PS00086">
    <property type="entry name" value="CYTOCHROME_P450"/>
    <property type="match status" value="1"/>
</dbReference>
<accession>Q92039</accession>
<gene>
    <name type="primary">cyp1a1</name>
    <name type="synonym">cyp1a</name>
</gene>
<comment type="function">
    <text>Cytochromes P450 are a group of heme-thiolate monooxygenases. They oxidize a variety of structurally unrelated compounds, including steroids, fatty acids, and xenobiotics.</text>
</comment>
<comment type="catalytic activity">
    <reaction>
        <text>an organic molecule + reduced [NADPH--hemoprotein reductase] + O2 = an alcohol + oxidized [NADPH--hemoprotein reductase] + H2O + H(+)</text>
        <dbReference type="Rhea" id="RHEA:17149"/>
        <dbReference type="Rhea" id="RHEA-COMP:11964"/>
        <dbReference type="Rhea" id="RHEA-COMP:11965"/>
        <dbReference type="ChEBI" id="CHEBI:15377"/>
        <dbReference type="ChEBI" id="CHEBI:15378"/>
        <dbReference type="ChEBI" id="CHEBI:15379"/>
        <dbReference type="ChEBI" id="CHEBI:30879"/>
        <dbReference type="ChEBI" id="CHEBI:57618"/>
        <dbReference type="ChEBI" id="CHEBI:58210"/>
        <dbReference type="ChEBI" id="CHEBI:142491"/>
        <dbReference type="EC" id="1.14.14.1"/>
    </reaction>
</comment>
<comment type="cofactor">
    <cofactor evidence="1">
        <name>heme</name>
        <dbReference type="ChEBI" id="CHEBI:30413"/>
    </cofactor>
</comment>
<comment type="subcellular location">
    <subcellularLocation>
        <location>Endoplasmic reticulum membrane</location>
        <topology>Peripheral membrane protein</topology>
    </subcellularLocation>
    <subcellularLocation>
        <location>Microsome membrane</location>
        <topology>Peripheral membrane protein</topology>
    </subcellularLocation>
</comment>
<comment type="similarity">
    <text evidence="2">Belongs to the cytochrome P450 family.</text>
</comment>
<organism>
    <name type="scientific">Chaetodon capistratus</name>
    <name type="common">Four-eye butterflyfish</name>
    <dbReference type="NCBI Taxonomy" id="37949"/>
    <lineage>
        <taxon>Eukaryota</taxon>
        <taxon>Metazoa</taxon>
        <taxon>Chordata</taxon>
        <taxon>Craniata</taxon>
        <taxon>Vertebrata</taxon>
        <taxon>Euteleostomi</taxon>
        <taxon>Actinopterygii</taxon>
        <taxon>Neopterygii</taxon>
        <taxon>Teleostei</taxon>
        <taxon>Neoteleostei</taxon>
        <taxon>Acanthomorphata</taxon>
        <taxon>Eupercaria</taxon>
        <taxon>Chaetodontiformes</taxon>
        <taxon>Chaetodontidae</taxon>
        <taxon>Chaetodon</taxon>
    </lineage>
</organism>
<proteinExistence type="evidence at transcript level"/>
<protein>
    <recommendedName>
        <fullName>Cytochrome P450 1A1</fullName>
        <ecNumber>1.14.14.1</ecNumber>
    </recommendedName>
    <alternativeName>
        <fullName>CYPIA1</fullName>
    </alternativeName>
</protein>
<reference key="1">
    <citation type="submission" date="1995-04" db="EMBL/GenBank/DDBJ databases">
        <title>Characterization and expression of a CYP1A gene from the tropical teleost, Chaetodon capistratus.</title>
        <authorList>
            <person name="Vrolijk N.H."/>
            <person name="Lin C."/>
            <person name="Chen T.T."/>
        </authorList>
    </citation>
    <scope>NUCLEOTIDE SEQUENCE [MRNA]</scope>
    <source>
        <tissue>Liver</tissue>
    </source>
</reference>
<sequence length="521" mass="58653">MALMILPFIGSVSVSESLVALTAVCLVYLILKFFRTEIPAGLRQLPGPKPLPIIGNVLEVGSKPHLSLTAMSKRYGDVFQIQIGMRPVVVLSGSETVRQALIKQGDEFSGRPDLYSFTFINDGKSLAFSTDQAGVCGACRKLAYSALRSFSTLDGTTPEYSCMLEEHICKEGECLINQLNTVMKADGSFDPFRHIVVSVANVICGMCFGRRYDHNDQDLLRLVNLSDEFGQVAGSGNPADFINILRFLPSTTMKKFMTINADFNTFVKKIVGEHYATFDKNNIRDITDSLIDHCEDRKLDENCNVQMSDEKIVGIVNDLFGAGFDTVSTALSWSVMYLVAYPDIQERLFQEIKDNVGLDRTPLLSDRSKVPYLEAFILELFRHSSFLPFTIPHCSAKDTSLNGYFIPKDTCVFINQWQINRDPELWKDPSSFNPDRFLSCNGTEVNKQEGEKVMVFGMGKRRCIGEVIARNEVYRGLAILIQRLQFHEMPGELLDMTPEYGLTMKHKRCHLRATMRARNEQ</sequence>
<evidence type="ECO:0000250" key="1"/>
<evidence type="ECO:0000305" key="2"/>
<name>CP1A1_CHACA</name>
<keyword id="KW-0256">Endoplasmic reticulum</keyword>
<keyword id="KW-0349">Heme</keyword>
<keyword id="KW-0408">Iron</keyword>
<keyword id="KW-0472">Membrane</keyword>
<keyword id="KW-0479">Metal-binding</keyword>
<keyword id="KW-0492">Microsome</keyword>
<keyword id="KW-0503">Monooxygenase</keyword>
<keyword id="KW-0560">Oxidoreductase</keyword>